<sequence>MKLQGSRMWLCPRTRLPVGASALGFLILCWLYVFPGYRLPGHKEMVREVLRFGPGWRKNRTEMDSFRKLLQDCCDPPHLFSLTKVNTPLGENLWFDGEFFHSLTIDNSTRSLFPQDTPFKLPLKRCSVVGNGGILKNSRCGEQIDEADFVMRCNLPPLSREYTEDVGTRTQLVTVNPSIIDKRYQNLLWSRKSFVENLRVYQQSYVYMPAFSTKRGTDPSLRVYYTLADFGTNQTVLFANPNFLRNVGKFWKSRGIHSKRLSTGLFMVSAALSLCEEVTIYGFWPFQMDLGGRYISHHYYDNTLPLSGVHAMPEEFLQLWLLHKSGVLQMQLDQCKKDVSSQKPH</sequence>
<organism>
    <name type="scientific">Xenopus tropicalis</name>
    <name type="common">Western clawed frog</name>
    <name type="synonym">Silurana tropicalis</name>
    <dbReference type="NCBI Taxonomy" id="8364"/>
    <lineage>
        <taxon>Eukaryota</taxon>
        <taxon>Metazoa</taxon>
        <taxon>Chordata</taxon>
        <taxon>Craniata</taxon>
        <taxon>Vertebrata</taxon>
        <taxon>Euteleostomi</taxon>
        <taxon>Amphibia</taxon>
        <taxon>Batrachia</taxon>
        <taxon>Anura</taxon>
        <taxon>Pipoidea</taxon>
        <taxon>Pipidae</taxon>
        <taxon>Xenopodinae</taxon>
        <taxon>Xenopus</taxon>
        <taxon>Silurana</taxon>
    </lineage>
</organism>
<dbReference type="EC" id="2.4.3.8" evidence="2"/>
<dbReference type="EMBL" id="AY652775">
    <property type="protein sequence ID" value="AAT67042.2"/>
    <property type="molecule type" value="mRNA"/>
</dbReference>
<dbReference type="EMBL" id="BC170804">
    <property type="protein sequence ID" value="AAI70804.1"/>
    <property type="molecule type" value="mRNA"/>
</dbReference>
<dbReference type="EMBL" id="BC170806">
    <property type="protein sequence ID" value="AAI70806.1"/>
    <property type="molecule type" value="mRNA"/>
</dbReference>
<dbReference type="RefSeq" id="NP_001003659.1">
    <property type="nucleotide sequence ID" value="NM_001003659.1"/>
</dbReference>
<dbReference type="SMR" id="Q6DNG6"/>
<dbReference type="FunCoup" id="Q6DNG6">
    <property type="interactions" value="201"/>
</dbReference>
<dbReference type="CAZy" id="GT29">
    <property type="family name" value="Glycosyltransferase Family 29"/>
</dbReference>
<dbReference type="GlyCosmos" id="Q6DNG6">
    <property type="glycosylation" value="3 sites, No reported glycans"/>
</dbReference>
<dbReference type="GeneID" id="444887"/>
<dbReference type="KEGG" id="xtr:444887"/>
<dbReference type="CTD" id="6489"/>
<dbReference type="Xenbase" id="XB-GENE-5824739">
    <property type="gene designation" value="st8sia1"/>
</dbReference>
<dbReference type="InParanoid" id="Q6DNG6"/>
<dbReference type="OMA" id="MAGLAWK"/>
<dbReference type="OrthoDB" id="10264956at2759"/>
<dbReference type="BRENDA" id="2.4.99.8">
    <property type="organism ID" value="8483"/>
</dbReference>
<dbReference type="Reactome" id="R-XTR-4085001">
    <property type="pathway name" value="Sialic acid metabolism"/>
</dbReference>
<dbReference type="UniPathway" id="UPA00222"/>
<dbReference type="UniPathway" id="UPA00378"/>
<dbReference type="Proteomes" id="UP000008143">
    <property type="component" value="Chromosome 9"/>
</dbReference>
<dbReference type="GO" id="GO:0000139">
    <property type="term" value="C:Golgi membrane"/>
    <property type="evidence" value="ECO:0000250"/>
    <property type="project" value="UniProtKB"/>
</dbReference>
<dbReference type="GO" id="GO:0003828">
    <property type="term" value="F:alpha-N-acetylneuraminate alpha-2,8-sialyltransferase activity"/>
    <property type="evidence" value="ECO:0000250"/>
    <property type="project" value="UniProtKB"/>
</dbReference>
<dbReference type="GO" id="GO:0001574">
    <property type="term" value="P:ganglioside biosynthetic process"/>
    <property type="evidence" value="ECO:0000250"/>
    <property type="project" value="UniProtKB"/>
</dbReference>
<dbReference type="GO" id="GO:0006688">
    <property type="term" value="P:glycosphingolipid biosynthetic process"/>
    <property type="evidence" value="ECO:0000250"/>
    <property type="project" value="UniProtKB"/>
</dbReference>
<dbReference type="GO" id="GO:0006486">
    <property type="term" value="P:protein glycosylation"/>
    <property type="evidence" value="ECO:0007669"/>
    <property type="project" value="UniProtKB-UniPathway"/>
</dbReference>
<dbReference type="CDD" id="cd23989">
    <property type="entry name" value="GT29_ST8SIA1"/>
    <property type="match status" value="1"/>
</dbReference>
<dbReference type="FunFam" id="3.90.1480.20:FF:000014">
    <property type="entry name" value="Alpha-N-acetylneuraminide alpha-2,8-sialyltransferase"/>
    <property type="match status" value="1"/>
</dbReference>
<dbReference type="Gene3D" id="3.90.1480.20">
    <property type="entry name" value="Glycosyl transferase family 29"/>
    <property type="match status" value="1"/>
</dbReference>
<dbReference type="InterPro" id="IPR001675">
    <property type="entry name" value="Glyco_trans_29"/>
</dbReference>
<dbReference type="InterPro" id="IPR050943">
    <property type="entry name" value="Glycosyltr_29_Sialyltrsf"/>
</dbReference>
<dbReference type="InterPro" id="IPR038578">
    <property type="entry name" value="GT29-like_sf"/>
</dbReference>
<dbReference type="InterPro" id="IPR012163">
    <property type="entry name" value="Sialyl_trans"/>
</dbReference>
<dbReference type="PANTHER" id="PTHR11987">
    <property type="entry name" value="ALPHA-2,8-SIALYLTRANSFERASE"/>
    <property type="match status" value="1"/>
</dbReference>
<dbReference type="PANTHER" id="PTHR11987:SF3">
    <property type="entry name" value="ALPHA-N-ACETYLNEURAMINIDE ALPHA-2,8-SIALYLTRANSFERASE"/>
    <property type="match status" value="1"/>
</dbReference>
<dbReference type="Pfam" id="PF00777">
    <property type="entry name" value="Glyco_transf_29"/>
    <property type="match status" value="1"/>
</dbReference>
<dbReference type="PIRSF" id="PIRSF005557">
    <property type="entry name" value="Sialyl_trans"/>
    <property type="match status" value="1"/>
</dbReference>
<keyword id="KW-0217">Developmental protein</keyword>
<keyword id="KW-1015">Disulfide bond</keyword>
<keyword id="KW-0325">Glycoprotein</keyword>
<keyword id="KW-0328">Glycosyltransferase</keyword>
<keyword id="KW-0333">Golgi apparatus</keyword>
<keyword id="KW-0444">Lipid biosynthesis</keyword>
<keyword id="KW-0443">Lipid metabolism</keyword>
<keyword id="KW-0472">Membrane</keyword>
<keyword id="KW-1185">Reference proteome</keyword>
<keyword id="KW-0735">Signal-anchor</keyword>
<keyword id="KW-0746">Sphingolipid metabolism</keyword>
<keyword id="KW-0808">Transferase</keyword>
<keyword id="KW-0812">Transmembrane</keyword>
<keyword id="KW-1133">Transmembrane helix</keyword>
<name>SIA8A_XENTR</name>
<proteinExistence type="evidence at transcript level"/>
<protein>
    <recommendedName>
        <fullName evidence="3">Alpha-N-acetylneuraminide alpha-2,8-sialyltransferase</fullName>
        <ecNumber evidence="2">2.4.3.8</ecNumber>
    </recommendedName>
    <alternativeName>
        <fullName>Alpha-2,8-sialyltransferase 8A</fullName>
    </alternativeName>
    <alternativeName>
        <fullName evidence="2">Ganglioside GD3 synthase</fullName>
    </alternativeName>
    <alternativeName>
        <fullName>Sialyltransferase 8A</fullName>
        <shortName>SIAT8-A</shortName>
    </alternativeName>
    <alternativeName>
        <fullName>Sialyltransferase St8Sia I</fullName>
        <shortName>ST8SiaI</shortName>
    </alternativeName>
</protein>
<accession>Q6DNG6</accession>
<feature type="chain" id="PRO_0000376860" description="Alpha-N-acetylneuraminide alpha-2,8-sialyltransferase">
    <location>
        <begin position="1"/>
        <end position="345"/>
    </location>
</feature>
<feature type="topological domain" description="Cytoplasmic" evidence="4">
    <location>
        <begin position="1"/>
        <end position="15"/>
    </location>
</feature>
<feature type="transmembrane region" description="Helical; Signal-anchor for type II membrane protein" evidence="4">
    <location>
        <begin position="16"/>
        <end position="36"/>
    </location>
</feature>
<feature type="topological domain" description="Lumenal" evidence="4">
    <location>
        <begin position="37"/>
        <end position="345"/>
    </location>
</feature>
<feature type="active site" description="Proton donor/acceptor" evidence="1">
    <location>
        <position position="310"/>
    </location>
</feature>
<feature type="binding site" evidence="1">
    <location>
        <position position="131"/>
    </location>
    <ligand>
        <name>CMP-N-acetyl-beta-neuraminate</name>
        <dbReference type="ChEBI" id="CHEBI:57812"/>
    </ligand>
</feature>
<feature type="binding site" evidence="1">
    <location>
        <position position="154"/>
    </location>
    <ligand>
        <name>CMP-N-acetyl-beta-neuraminate</name>
        <dbReference type="ChEBI" id="CHEBI:57812"/>
    </ligand>
</feature>
<feature type="binding site" evidence="1">
    <location>
        <position position="154"/>
    </location>
    <ligand>
        <name>substrate</name>
    </ligand>
</feature>
<feature type="binding site" evidence="1">
    <location>
        <begin position="176"/>
        <end position="178"/>
    </location>
    <ligand>
        <name>substrate</name>
    </ligand>
</feature>
<feature type="binding site" evidence="1">
    <location>
        <begin position="262"/>
        <end position="264"/>
    </location>
    <ligand>
        <name>substrate</name>
    </ligand>
</feature>
<feature type="binding site" evidence="1">
    <location>
        <position position="262"/>
    </location>
    <ligand>
        <name>CMP-N-acetyl-beta-neuraminate</name>
        <dbReference type="ChEBI" id="CHEBI:57812"/>
    </ligand>
</feature>
<feature type="binding site" evidence="1">
    <location>
        <position position="263"/>
    </location>
    <ligand>
        <name>CMP-N-acetyl-beta-neuraminate</name>
        <dbReference type="ChEBI" id="CHEBI:57812"/>
    </ligand>
</feature>
<feature type="binding site" evidence="1">
    <location>
        <position position="264"/>
    </location>
    <ligand>
        <name>CMP-N-acetyl-beta-neuraminate</name>
        <dbReference type="ChEBI" id="CHEBI:57812"/>
    </ligand>
</feature>
<feature type="binding site" evidence="1">
    <location>
        <position position="284"/>
    </location>
    <ligand>
        <name>CMP-N-acetyl-beta-neuraminate</name>
        <dbReference type="ChEBI" id="CHEBI:57812"/>
    </ligand>
</feature>
<feature type="binding site" evidence="1">
    <location>
        <position position="298"/>
    </location>
    <ligand>
        <name>CMP-N-acetyl-beta-neuraminate</name>
        <dbReference type="ChEBI" id="CHEBI:57812"/>
    </ligand>
</feature>
<feature type="glycosylation site" description="N-linked (GlcNAc...) asparagine" evidence="4">
    <location>
        <position position="59"/>
    </location>
</feature>
<feature type="glycosylation site" description="N-linked (GlcNAc...) asparagine" evidence="4">
    <location>
        <position position="107"/>
    </location>
</feature>
<feature type="glycosylation site" description="N-linked (GlcNAc...) asparagine" evidence="4">
    <location>
        <position position="233"/>
    </location>
</feature>
<feature type="disulfide bond" evidence="1">
    <location>
        <begin position="126"/>
        <end position="275"/>
    </location>
</feature>
<feature type="disulfide bond" evidence="1">
    <location>
        <begin position="140"/>
        <end position="335"/>
    </location>
</feature>
<gene>
    <name evidence="3" type="primary">st8sia1</name>
    <name evidence="6" type="synonym">st8siaI</name>
</gene>
<comment type="function">
    <text evidence="2 3">Catalyzes the addition of sialic acid in alpha 2,8-linkage to the sialic acid moiety of the ganglioside GM3 to form ganglioside GD3; gangliosides are a subfamily of complex glycosphingolipds that contain one or more residues of sialic acid (By similarity). Glycosphingolipids are required for convergence extension movements during early development (By similarity). Can catalyze the addition of a second alpha-2,8- sialic acid to GD3 to form GT3 (By similarity). Can use GM1b, GD1a and GT1b as acceptor substrates to synthesize GD1c, GT1a and GQ1b respectively (By similarity).</text>
</comment>
<comment type="catalytic activity">
    <reaction evidence="2">
        <text>an N-acetyl-alpha-neuraminyl-(2-&gt;3)-beta-D-galactosyl derivative + CMP-N-acetyl-beta-neuraminate = an N-acetyl-alpha-neuraminyl-(2-&gt;8)-N-acetyl-alpha-neuraminyl-(2-&gt;3)-beta-D-galactosyl derivative + CMP + H(+)</text>
        <dbReference type="Rhea" id="RHEA:19313"/>
        <dbReference type="ChEBI" id="CHEBI:15378"/>
        <dbReference type="ChEBI" id="CHEBI:57812"/>
        <dbReference type="ChEBI" id="CHEBI:60377"/>
        <dbReference type="ChEBI" id="CHEBI:140308"/>
        <dbReference type="ChEBI" id="CHEBI:140309"/>
        <dbReference type="EC" id="2.4.3.8"/>
    </reaction>
</comment>
<comment type="catalytic activity">
    <reaction evidence="2">
        <text>a ganglioside GM3 (d18:1(4E)) + CMP-N-acetyl-beta-neuraminate = a ganglioside GD3 (d18:1(4E)) + CMP + H(+)</text>
        <dbReference type="Rhea" id="RHEA:41760"/>
        <dbReference type="ChEBI" id="CHEBI:15378"/>
        <dbReference type="ChEBI" id="CHEBI:57812"/>
        <dbReference type="ChEBI" id="CHEBI:60065"/>
        <dbReference type="ChEBI" id="CHEBI:60377"/>
        <dbReference type="ChEBI" id="CHEBI:78436"/>
    </reaction>
    <physiologicalReaction direction="left-to-right" evidence="2">
        <dbReference type="Rhea" id="RHEA:41761"/>
    </physiologicalReaction>
</comment>
<comment type="catalytic activity">
    <reaction evidence="3">
        <text>a ganglioside GD3 (d18:1(4E)) + CMP-N-acetyl-beta-neuraminate = a ganglioside GT3 (d18:1(4E)) + CMP + H(+)</text>
        <dbReference type="Rhea" id="RHEA:41764"/>
        <dbReference type="ChEBI" id="CHEBI:15378"/>
        <dbReference type="ChEBI" id="CHEBI:57812"/>
        <dbReference type="ChEBI" id="CHEBI:60377"/>
        <dbReference type="ChEBI" id="CHEBI:78436"/>
        <dbReference type="ChEBI" id="CHEBI:78438"/>
    </reaction>
    <physiologicalReaction direction="left-to-right" evidence="3">
        <dbReference type="Rhea" id="RHEA:41765"/>
    </physiologicalReaction>
</comment>
<comment type="catalytic activity">
    <reaction evidence="3">
        <text>a ganglioside GD1a (d18:1(4E)) + CMP-N-acetyl-beta-neuraminate = a ganglioside GT1a (d18:1(4E)) + CMP + H(+)</text>
        <dbReference type="Rhea" id="RHEA:41768"/>
        <dbReference type="ChEBI" id="CHEBI:15378"/>
        <dbReference type="ChEBI" id="CHEBI:57812"/>
        <dbReference type="ChEBI" id="CHEBI:60377"/>
        <dbReference type="ChEBI" id="CHEBI:78445"/>
        <dbReference type="ChEBI" id="CHEBI:78447"/>
    </reaction>
    <physiologicalReaction direction="left-to-right" evidence="3">
        <dbReference type="Rhea" id="RHEA:41769"/>
    </physiologicalReaction>
</comment>
<comment type="catalytic activity">
    <reaction evidence="3">
        <text>a ganglioside GT1b (d18:1(4E)) + CMP-N-acetyl-beta-neuraminate = a ganglioside GQ1b (d18:1(4E)) + CMP + H(+)</text>
        <dbReference type="Rhea" id="RHEA:41772"/>
        <dbReference type="ChEBI" id="CHEBI:15378"/>
        <dbReference type="ChEBI" id="CHEBI:57812"/>
        <dbReference type="ChEBI" id="CHEBI:60377"/>
        <dbReference type="ChEBI" id="CHEBI:78452"/>
        <dbReference type="ChEBI" id="CHEBI:78455"/>
    </reaction>
    <physiologicalReaction direction="left-to-right" evidence="3">
        <dbReference type="Rhea" id="RHEA:41773"/>
    </physiologicalReaction>
</comment>
<comment type="catalytic activity">
    <reaction evidence="3">
        <text>a ganglioside GM1b (d18:1(4E)) + CMP-N-acetyl-beta-neuraminate = a ganglioside GD1c (d18:1(4E)) + CMP + H(+)</text>
        <dbReference type="Rhea" id="RHEA:47576"/>
        <dbReference type="ChEBI" id="CHEBI:15378"/>
        <dbReference type="ChEBI" id="CHEBI:57812"/>
        <dbReference type="ChEBI" id="CHEBI:60377"/>
        <dbReference type="ChEBI" id="CHEBI:78568"/>
        <dbReference type="ChEBI" id="CHEBI:87787"/>
    </reaction>
    <physiologicalReaction direction="left-to-right" evidence="3">
        <dbReference type="Rhea" id="RHEA:47577"/>
    </physiologicalReaction>
</comment>
<comment type="catalytic activity">
    <reaction evidence="3">
        <text>a ganglioside GD3 + CMP-N-acetyl-beta-neuraminate = a ganglioside GT3 + CMP + H(+)</text>
        <dbReference type="Rhea" id="RHEA:77295"/>
        <dbReference type="ChEBI" id="CHEBI:15378"/>
        <dbReference type="ChEBI" id="CHEBI:57812"/>
        <dbReference type="ChEBI" id="CHEBI:60377"/>
        <dbReference type="ChEBI" id="CHEBI:79214"/>
        <dbReference type="ChEBI" id="CHEBI:79216"/>
    </reaction>
    <physiologicalReaction direction="left-to-right" evidence="3">
        <dbReference type="Rhea" id="RHEA:77296"/>
    </physiologicalReaction>
</comment>
<comment type="catalytic activity">
    <reaction evidence="3">
        <text>[alpha-N-acetylneuraminyl-(2-&gt;8)](n)-alpha-N-acetylneuraminyl-(2-&gt;8)-alpha-N-acetylneuraminyl-(2-&gt;3)-beta-D-galactosyl-(1-&gt;4)-beta-D-glucosyl-(1&lt;-&gt;1)-ceramide + CMP-N-acetyl-beta-neuraminate = [alpha-N-acetylneuraminyl-(2-&gt;8)](n+1)-alpha-N-acetylneuraminyl-(2-&gt;8)-alpha-N-acetylneuraminyl-(2-&gt;3)-beta-D-galactosyl-(1-&gt;4)-beta-D-glucosyl-(1&lt;-&gt;1)-ceramide + CMP + H(+)</text>
        <dbReference type="Rhea" id="RHEA:77371"/>
        <dbReference type="Rhea" id="RHEA-COMP:18881"/>
        <dbReference type="Rhea" id="RHEA-COMP:18935"/>
        <dbReference type="ChEBI" id="CHEBI:15378"/>
        <dbReference type="ChEBI" id="CHEBI:57812"/>
        <dbReference type="ChEBI" id="CHEBI:60377"/>
        <dbReference type="ChEBI" id="CHEBI:197322"/>
    </reaction>
    <physiologicalReaction direction="left-to-right" evidence="3">
        <dbReference type="Rhea" id="RHEA:77372"/>
    </physiologicalReaction>
</comment>
<comment type="pathway">
    <text evidence="5">Protein modification; protein glycosylation.</text>
</comment>
<comment type="pathway">
    <text evidence="2">Lipid metabolism; sphingolipid metabolism.</text>
</comment>
<comment type="subcellular location">
    <subcellularLocation>
        <location evidence="2">Golgi apparatus membrane</location>
        <topology evidence="2">Single-pass type II membrane protein</topology>
    </subcellularLocation>
</comment>
<comment type="similarity">
    <text evidence="4">Belongs to the glycosyltransferase 29 family.</text>
</comment>
<evidence type="ECO:0000250" key="1">
    <source>
        <dbReference type="UniProtKB" id="O43173"/>
    </source>
</evidence>
<evidence type="ECO:0000250" key="2">
    <source>
        <dbReference type="UniProtKB" id="Q6ZXA0"/>
    </source>
</evidence>
<evidence type="ECO:0000250" key="3">
    <source>
        <dbReference type="UniProtKB" id="Q92185"/>
    </source>
</evidence>
<evidence type="ECO:0000255" key="4"/>
<evidence type="ECO:0000305" key="5"/>
<evidence type="ECO:0000312" key="6">
    <source>
        <dbReference type="EMBL" id="AAI70804.1"/>
    </source>
</evidence>
<evidence type="ECO:0000312" key="7">
    <source>
        <dbReference type="EMBL" id="AAT67042.2"/>
    </source>
</evidence>
<reference evidence="5 7" key="1">
    <citation type="journal article" date="2007" name="Mol. Cell. Biochem.">
        <title>Molecular cloning and expression of alpha2,8-sialyltransferase (ST8Sia I, GD3 Synthase) in Xenopus.</title>
        <authorList>
            <person name="Rimoldi S."/>
            <person name="Papis E."/>
            <person name="Bernardini G."/>
            <person name="Prati M."/>
            <person name="Gornati R."/>
        </authorList>
    </citation>
    <scope>NUCLEOTIDE SEQUENCE [MRNA]</scope>
</reference>
<reference evidence="6" key="2">
    <citation type="submission" date="2008-11" db="EMBL/GenBank/DDBJ databases">
        <authorList>
            <consortium name="NIH - Xenopus Gene Collection (XGC) project"/>
        </authorList>
    </citation>
    <scope>NUCLEOTIDE SEQUENCE [LARGE SCALE MRNA]</scope>
</reference>